<name>CYSI_SERP5</name>
<evidence type="ECO:0000255" key="1">
    <source>
        <dbReference type="HAMAP-Rule" id="MF_01540"/>
    </source>
</evidence>
<proteinExistence type="inferred from homology"/>
<comment type="function">
    <text evidence="1">Component of the sulfite reductase complex that catalyzes the 6-electron reduction of sulfite to sulfide. This is one of several activities required for the biosynthesis of L-cysteine from sulfate.</text>
</comment>
<comment type="catalytic activity">
    <reaction evidence="1">
        <text>hydrogen sulfide + 3 NADP(+) + 3 H2O = sulfite + 3 NADPH + 4 H(+)</text>
        <dbReference type="Rhea" id="RHEA:13801"/>
        <dbReference type="ChEBI" id="CHEBI:15377"/>
        <dbReference type="ChEBI" id="CHEBI:15378"/>
        <dbReference type="ChEBI" id="CHEBI:17359"/>
        <dbReference type="ChEBI" id="CHEBI:29919"/>
        <dbReference type="ChEBI" id="CHEBI:57783"/>
        <dbReference type="ChEBI" id="CHEBI:58349"/>
        <dbReference type="EC" id="1.8.1.2"/>
    </reaction>
</comment>
<comment type="cofactor">
    <cofactor evidence="1">
        <name>siroheme</name>
        <dbReference type="ChEBI" id="CHEBI:60052"/>
    </cofactor>
    <text evidence="1">Binds 1 siroheme per subunit.</text>
</comment>
<comment type="cofactor">
    <cofactor evidence="1">
        <name>[4Fe-4S] cluster</name>
        <dbReference type="ChEBI" id="CHEBI:49883"/>
    </cofactor>
    <text evidence="1">Binds 1 [4Fe-4S] cluster per subunit.</text>
</comment>
<comment type="pathway">
    <text evidence="1">Sulfur metabolism; hydrogen sulfide biosynthesis; hydrogen sulfide from sulfite (NADPH route): step 1/1.</text>
</comment>
<comment type="subunit">
    <text evidence="1">Alpha(8)-beta(8). The alpha component is a flavoprotein, the beta component is a hemoprotein.</text>
</comment>
<comment type="similarity">
    <text evidence="1">Belongs to the nitrite and sulfite reductase 4Fe-4S domain family.</text>
</comment>
<dbReference type="EC" id="1.8.1.2" evidence="1"/>
<dbReference type="EMBL" id="CP000826">
    <property type="protein sequence ID" value="ABV39917.1"/>
    <property type="molecule type" value="Genomic_DNA"/>
</dbReference>
<dbReference type="SMR" id="A8G9X7"/>
<dbReference type="STRING" id="399741.Spro_0811"/>
<dbReference type="KEGG" id="spe:Spro_0811"/>
<dbReference type="eggNOG" id="COG0155">
    <property type="taxonomic scope" value="Bacteria"/>
</dbReference>
<dbReference type="HOGENOM" id="CLU_001975_3_2_6"/>
<dbReference type="OrthoDB" id="3189055at2"/>
<dbReference type="UniPathway" id="UPA00140">
    <property type="reaction ID" value="UER00207"/>
</dbReference>
<dbReference type="GO" id="GO:0009337">
    <property type="term" value="C:sulfite reductase complex (NADPH)"/>
    <property type="evidence" value="ECO:0007669"/>
    <property type="project" value="InterPro"/>
</dbReference>
<dbReference type="GO" id="GO:0051539">
    <property type="term" value="F:4 iron, 4 sulfur cluster binding"/>
    <property type="evidence" value="ECO:0007669"/>
    <property type="project" value="UniProtKB-KW"/>
</dbReference>
<dbReference type="GO" id="GO:0020037">
    <property type="term" value="F:heme binding"/>
    <property type="evidence" value="ECO:0007669"/>
    <property type="project" value="InterPro"/>
</dbReference>
<dbReference type="GO" id="GO:0046872">
    <property type="term" value="F:metal ion binding"/>
    <property type="evidence" value="ECO:0007669"/>
    <property type="project" value="UniProtKB-KW"/>
</dbReference>
<dbReference type="GO" id="GO:0050661">
    <property type="term" value="F:NADP binding"/>
    <property type="evidence" value="ECO:0007669"/>
    <property type="project" value="InterPro"/>
</dbReference>
<dbReference type="GO" id="GO:0050311">
    <property type="term" value="F:sulfite reductase (ferredoxin) activity"/>
    <property type="evidence" value="ECO:0007669"/>
    <property type="project" value="TreeGrafter"/>
</dbReference>
<dbReference type="GO" id="GO:0004783">
    <property type="term" value="F:sulfite reductase (NADPH) activity"/>
    <property type="evidence" value="ECO:0007669"/>
    <property type="project" value="UniProtKB-UniRule"/>
</dbReference>
<dbReference type="GO" id="GO:0019344">
    <property type="term" value="P:cysteine biosynthetic process"/>
    <property type="evidence" value="ECO:0007669"/>
    <property type="project" value="UniProtKB-KW"/>
</dbReference>
<dbReference type="GO" id="GO:0070814">
    <property type="term" value="P:hydrogen sulfide biosynthetic process"/>
    <property type="evidence" value="ECO:0007669"/>
    <property type="project" value="UniProtKB-UniRule"/>
</dbReference>
<dbReference type="GO" id="GO:0000103">
    <property type="term" value="P:sulfate assimilation"/>
    <property type="evidence" value="ECO:0007669"/>
    <property type="project" value="UniProtKB-UniRule"/>
</dbReference>
<dbReference type="FunFam" id="3.30.413.10:FF:000003">
    <property type="entry name" value="Sulfite reductase [NADPH] hemoprotein beta-component"/>
    <property type="match status" value="1"/>
</dbReference>
<dbReference type="FunFam" id="3.30.413.10:FF:000004">
    <property type="entry name" value="Sulfite reductase [NADPH] hemoprotein beta-component"/>
    <property type="match status" value="1"/>
</dbReference>
<dbReference type="Gene3D" id="3.30.413.10">
    <property type="entry name" value="Sulfite Reductase Hemoprotein, domain 1"/>
    <property type="match status" value="2"/>
</dbReference>
<dbReference type="HAMAP" id="MF_01540">
    <property type="entry name" value="CysI"/>
    <property type="match status" value="1"/>
</dbReference>
<dbReference type="InterPro" id="IPR011786">
    <property type="entry name" value="CysI"/>
</dbReference>
<dbReference type="InterPro" id="IPR005117">
    <property type="entry name" value="NiRdtase/SiRdtase_haem-b_fer"/>
</dbReference>
<dbReference type="InterPro" id="IPR036136">
    <property type="entry name" value="Nit/Sulf_reduc_fer-like_dom_sf"/>
</dbReference>
<dbReference type="InterPro" id="IPR006067">
    <property type="entry name" value="NO2/SO3_Rdtase_4Fe4S_dom"/>
</dbReference>
<dbReference type="InterPro" id="IPR045169">
    <property type="entry name" value="NO2/SO3_Rdtase_4Fe4S_prot"/>
</dbReference>
<dbReference type="InterPro" id="IPR045854">
    <property type="entry name" value="NO2/SO3_Rdtase_4Fe4S_sf"/>
</dbReference>
<dbReference type="InterPro" id="IPR006066">
    <property type="entry name" value="NO2/SO3_Rdtase_FeS/sirohaem_BS"/>
</dbReference>
<dbReference type="NCBIfam" id="TIGR02041">
    <property type="entry name" value="CysI"/>
    <property type="match status" value="1"/>
</dbReference>
<dbReference type="NCBIfam" id="NF010029">
    <property type="entry name" value="PRK13504.1"/>
    <property type="match status" value="1"/>
</dbReference>
<dbReference type="PANTHER" id="PTHR11493:SF47">
    <property type="entry name" value="SULFITE REDUCTASE [NADPH] SUBUNIT BETA"/>
    <property type="match status" value="1"/>
</dbReference>
<dbReference type="PANTHER" id="PTHR11493">
    <property type="entry name" value="SULFITE REDUCTASE [NADPH] SUBUNIT BETA-RELATED"/>
    <property type="match status" value="1"/>
</dbReference>
<dbReference type="Pfam" id="PF01077">
    <property type="entry name" value="NIR_SIR"/>
    <property type="match status" value="1"/>
</dbReference>
<dbReference type="Pfam" id="PF03460">
    <property type="entry name" value="NIR_SIR_ferr"/>
    <property type="match status" value="2"/>
</dbReference>
<dbReference type="PRINTS" id="PR00397">
    <property type="entry name" value="SIROHAEM"/>
</dbReference>
<dbReference type="SUPFAM" id="SSF56014">
    <property type="entry name" value="Nitrite and sulphite reductase 4Fe-4S domain-like"/>
    <property type="match status" value="2"/>
</dbReference>
<dbReference type="SUPFAM" id="SSF55124">
    <property type="entry name" value="Nitrite/Sulfite reductase N-terminal domain-like"/>
    <property type="match status" value="2"/>
</dbReference>
<dbReference type="PROSITE" id="PS00365">
    <property type="entry name" value="NIR_SIR"/>
    <property type="match status" value="1"/>
</dbReference>
<protein>
    <recommendedName>
        <fullName evidence="1">Sulfite reductase [NADPH] hemoprotein beta-component</fullName>
        <shortName evidence="1">SiR-HP</shortName>
        <shortName evidence="1">SiRHP</shortName>
        <ecNumber evidence="1">1.8.1.2</ecNumber>
    </recommendedName>
</protein>
<gene>
    <name evidence="1" type="primary">cysI</name>
    <name type="ordered locus">Spro_0811</name>
</gene>
<keyword id="KW-0004">4Fe-4S</keyword>
<keyword id="KW-0028">Amino-acid biosynthesis</keyword>
<keyword id="KW-0198">Cysteine biosynthesis</keyword>
<keyword id="KW-0349">Heme</keyword>
<keyword id="KW-0408">Iron</keyword>
<keyword id="KW-0411">Iron-sulfur</keyword>
<keyword id="KW-0479">Metal-binding</keyword>
<keyword id="KW-0521">NADP</keyword>
<keyword id="KW-0560">Oxidoreductase</keyword>
<accession>A8G9X7</accession>
<reference key="1">
    <citation type="submission" date="2007-09" db="EMBL/GenBank/DDBJ databases">
        <title>Complete sequence of chromosome of Serratia proteamaculans 568.</title>
        <authorList>
            <consortium name="US DOE Joint Genome Institute"/>
            <person name="Copeland A."/>
            <person name="Lucas S."/>
            <person name="Lapidus A."/>
            <person name="Barry K."/>
            <person name="Glavina del Rio T."/>
            <person name="Dalin E."/>
            <person name="Tice H."/>
            <person name="Pitluck S."/>
            <person name="Chain P."/>
            <person name="Malfatti S."/>
            <person name="Shin M."/>
            <person name="Vergez L."/>
            <person name="Schmutz J."/>
            <person name="Larimer F."/>
            <person name="Land M."/>
            <person name="Hauser L."/>
            <person name="Kyrpides N."/>
            <person name="Kim E."/>
            <person name="Taghavi S."/>
            <person name="Newman L."/>
            <person name="Vangronsveld J."/>
            <person name="van der Lelie D."/>
            <person name="Richardson P."/>
        </authorList>
    </citation>
    <scope>NUCLEOTIDE SEQUENCE [LARGE SCALE GENOMIC DNA]</scope>
    <source>
        <strain>568</strain>
    </source>
</reference>
<sequence length="571" mass="63873">MSDKHPGPLVVEGKLADAERLKKESNFLRGTIAEDLKDGLTGGFTGDNFLLIRFHGMYQQDDRDIRAERAEQKLEPRHAMMLRCRLPGGIISPQQWLGIDKFAQESTLYGSIRITNRQTFQFHGILKGNVKPVHQLLGRLGLDALATANDVNRNVLCTSNPVESELHQEAYEWAKKISEHLLPRTRAYAEVWLDQEKVATTDEEPILGATYLPRKFKTTVVIPPQNDVDLHANDMNFVAIAKNGKLVGFNLLVGGGLSIEHGNKKTYARQASEFGYIPLEHTLAVAEAVVTTQRDWGNRTDRKNAKTKYTLERVGVDTFRAEVEKRAGITFEPIRPYEFTGRGDRIGWVKGIDNQWHLTLFIENGRLLDYPGRPLKTGVAEIARIHKGDFRLTANQNLIVAGVPESEKAKIEALARDHGLIDDGVSVQRQNSMACVSFPTCPLAMAEAERFLPEFVTKVEGILHRHGVGDEHIVLRITGCPNGCGRALLAEIGLVGKAVGRYNLHLGGNREGTRIPRMYRENINEEEILREIDQLVGRWATERTAGEGFGDFTIRAGVVRPVVDPAQDFWD</sequence>
<feature type="chain" id="PRO_1000068767" description="Sulfite reductase [NADPH] hemoprotein beta-component">
    <location>
        <begin position="1"/>
        <end position="571"/>
    </location>
</feature>
<feature type="binding site" evidence="1">
    <location>
        <position position="435"/>
    </location>
    <ligand>
        <name>[4Fe-4S] cluster</name>
        <dbReference type="ChEBI" id="CHEBI:49883"/>
    </ligand>
</feature>
<feature type="binding site" evidence="1">
    <location>
        <position position="441"/>
    </location>
    <ligand>
        <name>[4Fe-4S] cluster</name>
        <dbReference type="ChEBI" id="CHEBI:49883"/>
    </ligand>
</feature>
<feature type="binding site" evidence="1">
    <location>
        <position position="480"/>
    </location>
    <ligand>
        <name>[4Fe-4S] cluster</name>
        <dbReference type="ChEBI" id="CHEBI:49883"/>
    </ligand>
</feature>
<feature type="binding site" evidence="1">
    <location>
        <position position="484"/>
    </location>
    <ligand>
        <name>[4Fe-4S] cluster</name>
        <dbReference type="ChEBI" id="CHEBI:49883"/>
    </ligand>
</feature>
<feature type="binding site" description="axial binding residue" evidence="1">
    <location>
        <position position="484"/>
    </location>
    <ligand>
        <name>siroheme</name>
        <dbReference type="ChEBI" id="CHEBI:60052"/>
    </ligand>
    <ligandPart>
        <name>Fe</name>
        <dbReference type="ChEBI" id="CHEBI:18248"/>
    </ligandPart>
</feature>
<organism>
    <name type="scientific">Serratia proteamaculans (strain 568)</name>
    <dbReference type="NCBI Taxonomy" id="399741"/>
    <lineage>
        <taxon>Bacteria</taxon>
        <taxon>Pseudomonadati</taxon>
        <taxon>Pseudomonadota</taxon>
        <taxon>Gammaproteobacteria</taxon>
        <taxon>Enterobacterales</taxon>
        <taxon>Yersiniaceae</taxon>
        <taxon>Serratia</taxon>
    </lineage>
</organism>